<dbReference type="EC" id="2.7.1.71" evidence="1"/>
<dbReference type="EMBL" id="CP000901">
    <property type="protein sequence ID" value="ABX85165.1"/>
    <property type="molecule type" value="Genomic_DNA"/>
</dbReference>
<dbReference type="RefSeq" id="WP_002208693.1">
    <property type="nucleotide sequence ID" value="NZ_CP009935.1"/>
</dbReference>
<dbReference type="SMR" id="A9R2W3"/>
<dbReference type="GeneID" id="57975502"/>
<dbReference type="KEGG" id="ypg:YpAngola_A3293"/>
<dbReference type="PATRIC" id="fig|349746.12.peg.4359"/>
<dbReference type="UniPathway" id="UPA00053">
    <property type="reaction ID" value="UER00088"/>
</dbReference>
<dbReference type="GO" id="GO:0005829">
    <property type="term" value="C:cytosol"/>
    <property type="evidence" value="ECO:0007669"/>
    <property type="project" value="TreeGrafter"/>
</dbReference>
<dbReference type="GO" id="GO:0005524">
    <property type="term" value="F:ATP binding"/>
    <property type="evidence" value="ECO:0007669"/>
    <property type="project" value="UniProtKB-UniRule"/>
</dbReference>
<dbReference type="GO" id="GO:0000287">
    <property type="term" value="F:magnesium ion binding"/>
    <property type="evidence" value="ECO:0007669"/>
    <property type="project" value="UniProtKB-UniRule"/>
</dbReference>
<dbReference type="GO" id="GO:0004765">
    <property type="term" value="F:shikimate kinase activity"/>
    <property type="evidence" value="ECO:0007669"/>
    <property type="project" value="UniProtKB-UniRule"/>
</dbReference>
<dbReference type="GO" id="GO:0008652">
    <property type="term" value="P:amino acid biosynthetic process"/>
    <property type="evidence" value="ECO:0007669"/>
    <property type="project" value="UniProtKB-KW"/>
</dbReference>
<dbReference type="GO" id="GO:0009073">
    <property type="term" value="P:aromatic amino acid family biosynthetic process"/>
    <property type="evidence" value="ECO:0007669"/>
    <property type="project" value="UniProtKB-KW"/>
</dbReference>
<dbReference type="GO" id="GO:0009423">
    <property type="term" value="P:chorismate biosynthetic process"/>
    <property type="evidence" value="ECO:0007669"/>
    <property type="project" value="UniProtKB-UniRule"/>
</dbReference>
<dbReference type="CDD" id="cd00464">
    <property type="entry name" value="SK"/>
    <property type="match status" value="1"/>
</dbReference>
<dbReference type="Gene3D" id="3.40.50.300">
    <property type="entry name" value="P-loop containing nucleotide triphosphate hydrolases"/>
    <property type="match status" value="1"/>
</dbReference>
<dbReference type="HAMAP" id="MF_00109">
    <property type="entry name" value="Shikimate_kinase"/>
    <property type="match status" value="1"/>
</dbReference>
<dbReference type="HAMAP" id="MF_01269">
    <property type="entry name" value="Shikimate_kinase_2"/>
    <property type="match status" value="1"/>
</dbReference>
<dbReference type="InterPro" id="IPR027417">
    <property type="entry name" value="P-loop_NTPase"/>
</dbReference>
<dbReference type="InterPro" id="IPR031322">
    <property type="entry name" value="Shikimate/glucono_kinase"/>
</dbReference>
<dbReference type="InterPro" id="IPR000623">
    <property type="entry name" value="Shikimate_kinase/TSH1"/>
</dbReference>
<dbReference type="InterPro" id="IPR027544">
    <property type="entry name" value="Shikimate_kinase_2"/>
</dbReference>
<dbReference type="InterPro" id="IPR023000">
    <property type="entry name" value="Shikimate_kinase_CS"/>
</dbReference>
<dbReference type="NCBIfam" id="NF002988">
    <property type="entry name" value="PRK03731.1"/>
    <property type="match status" value="1"/>
</dbReference>
<dbReference type="PANTHER" id="PTHR21087">
    <property type="entry name" value="SHIKIMATE KINASE"/>
    <property type="match status" value="1"/>
</dbReference>
<dbReference type="PANTHER" id="PTHR21087:SF21">
    <property type="entry name" value="SHIKIMATE KINASE 2"/>
    <property type="match status" value="1"/>
</dbReference>
<dbReference type="Pfam" id="PF01202">
    <property type="entry name" value="SKI"/>
    <property type="match status" value="1"/>
</dbReference>
<dbReference type="PRINTS" id="PR01100">
    <property type="entry name" value="SHIKIMTKNASE"/>
</dbReference>
<dbReference type="SUPFAM" id="SSF52540">
    <property type="entry name" value="P-loop containing nucleoside triphosphate hydrolases"/>
    <property type="match status" value="1"/>
</dbReference>
<dbReference type="PROSITE" id="PS01128">
    <property type="entry name" value="SHIKIMATE_KINASE"/>
    <property type="match status" value="1"/>
</dbReference>
<sequence length="174" mass="18864">MTQTIFMVGARGAGKTTIGKALAQALGYRFVDTDLFMQQTSQMTVAEVVESEGWDGFRLRESMALQAVTAPKTVVATGGGAVLSSENRAFMRDHGRVIYLRASAAVLAKRLAEDPEEAQRPSLTGKPIVEEILDVLASREALYQDVAHHVLDGTQTPSLVVEQILQMLTGEMVK</sequence>
<protein>
    <recommendedName>
        <fullName evidence="1">Shikimate kinase 2</fullName>
        <shortName evidence="1">SK 2</shortName>
        <ecNumber evidence="1">2.7.1.71</ecNumber>
    </recommendedName>
</protein>
<evidence type="ECO:0000255" key="1">
    <source>
        <dbReference type="HAMAP-Rule" id="MF_01269"/>
    </source>
</evidence>
<accession>A9R2W3</accession>
<reference key="1">
    <citation type="journal article" date="2010" name="J. Bacteriol.">
        <title>Genome sequence of the deep-rooted Yersinia pestis strain Angola reveals new insights into the evolution and pangenome of the plague bacterium.</title>
        <authorList>
            <person name="Eppinger M."/>
            <person name="Worsham P.L."/>
            <person name="Nikolich M.P."/>
            <person name="Riley D.R."/>
            <person name="Sebastian Y."/>
            <person name="Mou S."/>
            <person name="Achtman M."/>
            <person name="Lindler L.E."/>
            <person name="Ravel J."/>
        </authorList>
    </citation>
    <scope>NUCLEOTIDE SEQUENCE [LARGE SCALE GENOMIC DNA]</scope>
    <source>
        <strain>Angola</strain>
    </source>
</reference>
<comment type="function">
    <text evidence="1">Catalyzes the specific phosphorylation of the 3-hydroxyl group of shikimic acid using ATP as a cosubstrate.</text>
</comment>
<comment type="catalytic activity">
    <reaction evidence="1">
        <text>shikimate + ATP = 3-phosphoshikimate + ADP + H(+)</text>
        <dbReference type="Rhea" id="RHEA:13121"/>
        <dbReference type="ChEBI" id="CHEBI:15378"/>
        <dbReference type="ChEBI" id="CHEBI:30616"/>
        <dbReference type="ChEBI" id="CHEBI:36208"/>
        <dbReference type="ChEBI" id="CHEBI:145989"/>
        <dbReference type="ChEBI" id="CHEBI:456216"/>
        <dbReference type="EC" id="2.7.1.71"/>
    </reaction>
</comment>
<comment type="cofactor">
    <cofactor evidence="1">
        <name>Mg(2+)</name>
        <dbReference type="ChEBI" id="CHEBI:18420"/>
    </cofactor>
    <text evidence="1">Binds 1 Mg(2+) ion per subunit.</text>
</comment>
<comment type="pathway">
    <text evidence="1">Metabolic intermediate biosynthesis; chorismate biosynthesis; chorismate from D-erythrose 4-phosphate and phosphoenolpyruvate: step 5/7.</text>
</comment>
<comment type="subunit">
    <text evidence="1">Monomer.</text>
</comment>
<comment type="subcellular location">
    <subcellularLocation>
        <location evidence="1">Cytoplasm</location>
    </subcellularLocation>
</comment>
<comment type="domain">
    <text evidence="1">The LID domain closes over the active site upon ATP binding.</text>
</comment>
<comment type="similarity">
    <text evidence="1">Belongs to the shikimate kinase family. AroL subfamily.</text>
</comment>
<gene>
    <name evidence="1" type="primary">aroL</name>
    <name type="ordered locus">YpAngola_A3293</name>
</gene>
<proteinExistence type="inferred from homology"/>
<organism>
    <name type="scientific">Yersinia pestis bv. Antiqua (strain Angola)</name>
    <dbReference type="NCBI Taxonomy" id="349746"/>
    <lineage>
        <taxon>Bacteria</taxon>
        <taxon>Pseudomonadati</taxon>
        <taxon>Pseudomonadota</taxon>
        <taxon>Gammaproteobacteria</taxon>
        <taxon>Enterobacterales</taxon>
        <taxon>Yersiniaceae</taxon>
        <taxon>Yersinia</taxon>
    </lineage>
</organism>
<name>AROL_YERPG</name>
<feature type="chain" id="PRO_1000140147" description="Shikimate kinase 2">
    <location>
        <begin position="1"/>
        <end position="174"/>
    </location>
</feature>
<feature type="region of interest" description="LID domain">
    <location>
        <begin position="112"/>
        <end position="126"/>
    </location>
</feature>
<feature type="binding site" evidence="1">
    <location>
        <begin position="12"/>
        <end position="17"/>
    </location>
    <ligand>
        <name>ATP</name>
        <dbReference type="ChEBI" id="CHEBI:30616"/>
    </ligand>
</feature>
<feature type="binding site" evidence="1">
    <location>
        <position position="16"/>
    </location>
    <ligand>
        <name>Mg(2+)</name>
        <dbReference type="ChEBI" id="CHEBI:18420"/>
    </ligand>
</feature>
<feature type="binding site" evidence="1">
    <location>
        <position position="32"/>
    </location>
    <ligand>
        <name>Mg(2+)</name>
        <dbReference type="ChEBI" id="CHEBI:18420"/>
    </ligand>
</feature>
<feature type="binding site" evidence="1">
    <location>
        <position position="34"/>
    </location>
    <ligand>
        <name>substrate</name>
    </ligand>
</feature>
<feature type="binding site" evidence="1">
    <location>
        <position position="58"/>
    </location>
    <ligand>
        <name>substrate</name>
    </ligand>
</feature>
<feature type="binding site" evidence="1">
    <location>
        <position position="79"/>
    </location>
    <ligand>
        <name>substrate</name>
    </ligand>
</feature>
<feature type="binding site" evidence="1">
    <location>
        <position position="120"/>
    </location>
    <ligand>
        <name>ATP</name>
        <dbReference type="ChEBI" id="CHEBI:30616"/>
    </ligand>
</feature>
<feature type="binding site" evidence="1">
    <location>
        <position position="139"/>
    </location>
    <ligand>
        <name>substrate</name>
    </ligand>
</feature>
<feature type="binding site" evidence="1">
    <location>
        <position position="155"/>
    </location>
    <ligand>
        <name>ATP</name>
        <dbReference type="ChEBI" id="CHEBI:30616"/>
    </ligand>
</feature>
<keyword id="KW-0028">Amino-acid biosynthesis</keyword>
<keyword id="KW-0057">Aromatic amino acid biosynthesis</keyword>
<keyword id="KW-0067">ATP-binding</keyword>
<keyword id="KW-0963">Cytoplasm</keyword>
<keyword id="KW-0418">Kinase</keyword>
<keyword id="KW-0460">Magnesium</keyword>
<keyword id="KW-0479">Metal-binding</keyword>
<keyword id="KW-0547">Nucleotide-binding</keyword>
<keyword id="KW-0808">Transferase</keyword>